<keyword id="KW-0342">GTP-binding</keyword>
<keyword id="KW-0547">Nucleotide-binding</keyword>
<keyword id="KW-0677">Repeat</keyword>
<keyword id="KW-0690">Ribosome biogenesis</keyword>
<feature type="chain" id="PRO_1000099151" description="GTPase Der">
    <location>
        <begin position="1"/>
        <end position="487"/>
    </location>
</feature>
<feature type="domain" description="EngA-type G 1">
    <location>
        <begin position="3"/>
        <end position="166"/>
    </location>
</feature>
<feature type="domain" description="EngA-type G 2">
    <location>
        <begin position="193"/>
        <end position="366"/>
    </location>
</feature>
<feature type="domain" description="KH-like" evidence="1">
    <location>
        <begin position="367"/>
        <end position="451"/>
    </location>
</feature>
<feature type="region of interest" description="Disordered" evidence="2">
    <location>
        <begin position="448"/>
        <end position="487"/>
    </location>
</feature>
<feature type="compositionally biased region" description="Basic and acidic residues" evidence="2">
    <location>
        <begin position="448"/>
        <end position="461"/>
    </location>
</feature>
<feature type="compositionally biased region" description="Basic residues" evidence="2">
    <location>
        <begin position="467"/>
        <end position="487"/>
    </location>
</feature>
<feature type="binding site" evidence="1">
    <location>
        <begin position="9"/>
        <end position="16"/>
    </location>
    <ligand>
        <name>GTP</name>
        <dbReference type="ChEBI" id="CHEBI:37565"/>
        <label>1</label>
    </ligand>
</feature>
<feature type="binding site" evidence="1">
    <location>
        <begin position="56"/>
        <end position="60"/>
    </location>
    <ligand>
        <name>GTP</name>
        <dbReference type="ChEBI" id="CHEBI:37565"/>
        <label>1</label>
    </ligand>
</feature>
<feature type="binding site" evidence="1">
    <location>
        <begin position="118"/>
        <end position="121"/>
    </location>
    <ligand>
        <name>GTP</name>
        <dbReference type="ChEBI" id="CHEBI:37565"/>
        <label>1</label>
    </ligand>
</feature>
<feature type="binding site" evidence="1">
    <location>
        <begin position="199"/>
        <end position="206"/>
    </location>
    <ligand>
        <name>GTP</name>
        <dbReference type="ChEBI" id="CHEBI:37565"/>
        <label>2</label>
    </ligand>
</feature>
<feature type="binding site" evidence="1">
    <location>
        <begin position="246"/>
        <end position="250"/>
    </location>
    <ligand>
        <name>GTP</name>
        <dbReference type="ChEBI" id="CHEBI:37565"/>
        <label>2</label>
    </ligand>
</feature>
<feature type="binding site" evidence="1">
    <location>
        <begin position="311"/>
        <end position="314"/>
    </location>
    <ligand>
        <name>GTP</name>
        <dbReference type="ChEBI" id="CHEBI:37565"/>
        <label>2</label>
    </ligand>
</feature>
<proteinExistence type="inferred from homology"/>
<dbReference type="EMBL" id="CP000949">
    <property type="protein sequence ID" value="ACA74801.1"/>
    <property type="molecule type" value="Genomic_DNA"/>
</dbReference>
<dbReference type="SMR" id="B1JDV4"/>
<dbReference type="STRING" id="390235.PputW619_4321"/>
<dbReference type="KEGG" id="ppw:PputW619_4321"/>
<dbReference type="eggNOG" id="COG1160">
    <property type="taxonomic scope" value="Bacteria"/>
</dbReference>
<dbReference type="HOGENOM" id="CLU_016077_6_2_6"/>
<dbReference type="OrthoDB" id="9805918at2"/>
<dbReference type="GO" id="GO:0005525">
    <property type="term" value="F:GTP binding"/>
    <property type="evidence" value="ECO:0007669"/>
    <property type="project" value="UniProtKB-UniRule"/>
</dbReference>
<dbReference type="GO" id="GO:0043022">
    <property type="term" value="F:ribosome binding"/>
    <property type="evidence" value="ECO:0007669"/>
    <property type="project" value="TreeGrafter"/>
</dbReference>
<dbReference type="GO" id="GO:0042254">
    <property type="term" value="P:ribosome biogenesis"/>
    <property type="evidence" value="ECO:0007669"/>
    <property type="project" value="UniProtKB-KW"/>
</dbReference>
<dbReference type="CDD" id="cd01894">
    <property type="entry name" value="EngA1"/>
    <property type="match status" value="1"/>
</dbReference>
<dbReference type="CDD" id="cd01895">
    <property type="entry name" value="EngA2"/>
    <property type="match status" value="1"/>
</dbReference>
<dbReference type="FunFam" id="3.30.300.20:FF:000004">
    <property type="entry name" value="GTPase Der"/>
    <property type="match status" value="1"/>
</dbReference>
<dbReference type="FunFam" id="3.40.50.300:FF:000040">
    <property type="entry name" value="GTPase Der"/>
    <property type="match status" value="1"/>
</dbReference>
<dbReference type="FunFam" id="3.40.50.300:FF:000057">
    <property type="entry name" value="GTPase Der"/>
    <property type="match status" value="1"/>
</dbReference>
<dbReference type="Gene3D" id="3.30.300.20">
    <property type="match status" value="1"/>
</dbReference>
<dbReference type="Gene3D" id="3.40.50.300">
    <property type="entry name" value="P-loop containing nucleotide triphosphate hydrolases"/>
    <property type="match status" value="2"/>
</dbReference>
<dbReference type="HAMAP" id="MF_00195">
    <property type="entry name" value="GTPase_Der"/>
    <property type="match status" value="1"/>
</dbReference>
<dbReference type="InterPro" id="IPR031166">
    <property type="entry name" value="G_ENGA"/>
</dbReference>
<dbReference type="InterPro" id="IPR006073">
    <property type="entry name" value="GTP-bd"/>
</dbReference>
<dbReference type="InterPro" id="IPR016484">
    <property type="entry name" value="GTPase_Der"/>
</dbReference>
<dbReference type="InterPro" id="IPR032859">
    <property type="entry name" value="KH_dom-like"/>
</dbReference>
<dbReference type="InterPro" id="IPR015946">
    <property type="entry name" value="KH_dom-like_a/b"/>
</dbReference>
<dbReference type="InterPro" id="IPR027417">
    <property type="entry name" value="P-loop_NTPase"/>
</dbReference>
<dbReference type="InterPro" id="IPR005225">
    <property type="entry name" value="Small_GTP-bd"/>
</dbReference>
<dbReference type="NCBIfam" id="TIGR03594">
    <property type="entry name" value="GTPase_EngA"/>
    <property type="match status" value="1"/>
</dbReference>
<dbReference type="NCBIfam" id="TIGR00231">
    <property type="entry name" value="small_GTP"/>
    <property type="match status" value="2"/>
</dbReference>
<dbReference type="PANTHER" id="PTHR43834">
    <property type="entry name" value="GTPASE DER"/>
    <property type="match status" value="1"/>
</dbReference>
<dbReference type="PANTHER" id="PTHR43834:SF6">
    <property type="entry name" value="GTPASE DER"/>
    <property type="match status" value="1"/>
</dbReference>
<dbReference type="Pfam" id="PF14714">
    <property type="entry name" value="KH_dom-like"/>
    <property type="match status" value="1"/>
</dbReference>
<dbReference type="Pfam" id="PF01926">
    <property type="entry name" value="MMR_HSR1"/>
    <property type="match status" value="2"/>
</dbReference>
<dbReference type="PIRSF" id="PIRSF006485">
    <property type="entry name" value="GTP-binding_EngA"/>
    <property type="match status" value="1"/>
</dbReference>
<dbReference type="PRINTS" id="PR00326">
    <property type="entry name" value="GTP1OBG"/>
</dbReference>
<dbReference type="SUPFAM" id="SSF52540">
    <property type="entry name" value="P-loop containing nucleoside triphosphate hydrolases"/>
    <property type="match status" value="2"/>
</dbReference>
<dbReference type="PROSITE" id="PS51712">
    <property type="entry name" value="G_ENGA"/>
    <property type="match status" value="2"/>
</dbReference>
<evidence type="ECO:0000255" key="1">
    <source>
        <dbReference type="HAMAP-Rule" id="MF_00195"/>
    </source>
</evidence>
<evidence type="ECO:0000256" key="2">
    <source>
        <dbReference type="SAM" id="MobiDB-lite"/>
    </source>
</evidence>
<organism>
    <name type="scientific">Pseudomonas putida (strain W619)</name>
    <dbReference type="NCBI Taxonomy" id="390235"/>
    <lineage>
        <taxon>Bacteria</taxon>
        <taxon>Pseudomonadati</taxon>
        <taxon>Pseudomonadota</taxon>
        <taxon>Gammaproteobacteria</taxon>
        <taxon>Pseudomonadales</taxon>
        <taxon>Pseudomonadaceae</taxon>
        <taxon>Pseudomonas</taxon>
    </lineage>
</organism>
<protein>
    <recommendedName>
        <fullName evidence="1">GTPase Der</fullName>
    </recommendedName>
    <alternativeName>
        <fullName evidence="1">GTP-binding protein EngA</fullName>
    </alternativeName>
</protein>
<reference key="1">
    <citation type="submission" date="2008-02" db="EMBL/GenBank/DDBJ databases">
        <title>Complete sequence of Pseudomonas putida W619.</title>
        <authorList>
            <person name="Copeland A."/>
            <person name="Lucas S."/>
            <person name="Lapidus A."/>
            <person name="Barry K."/>
            <person name="Detter J.C."/>
            <person name="Glavina del Rio T."/>
            <person name="Dalin E."/>
            <person name="Tice H."/>
            <person name="Pitluck S."/>
            <person name="Chain P."/>
            <person name="Malfatti S."/>
            <person name="Shin M."/>
            <person name="Vergez L."/>
            <person name="Schmutz J."/>
            <person name="Larimer F."/>
            <person name="Land M."/>
            <person name="Hauser L."/>
            <person name="Kyrpides N."/>
            <person name="Kim E."/>
            <person name="Taghavi S."/>
            <person name="Vangronsveld D."/>
            <person name="van der Lelie D."/>
            <person name="Richardson P."/>
        </authorList>
    </citation>
    <scope>NUCLEOTIDE SEQUENCE [LARGE SCALE GENOMIC DNA]</scope>
    <source>
        <strain>W619</strain>
    </source>
</reference>
<accession>B1JDV4</accession>
<sequence length="487" mass="54349">MVPVIALVGRPNVGKSTMFNRLTKTRDAIVGDLSGLTRDRQYGDASWQGRSFILIDTGGITGDEVGMDEKMAEQSLMAIEEADYVLFLVDARAGMTAADQMIAEHLRKRNKSAILVANKIDNIDADVARAEFSPLGMGNAIPVAGSQGRGINQLMESVLGHIPRDAEEEALDQEVAEGEEAVRIPGPSEKDGIKIAIIGRPNVGKSTLVNRMLGEERVVVYDQPGTTRDSIYIPFERDNEKYTFIDTAGVRKRGKIHEEVEKFSVVKTLQAIKDANVVIFVMDAREGVVDHDLNLLGFALEAGRAIVIALNKWDGMESGERDYVKTELERRLFFVDFADIHFISALHGTGVGHLYKSVQAAFKSAVTRWPTSRLTQILEDAVSEHQPPLVNGRRIKLRYAHLGGANPPLIVIHGNQTEKIPKSYSRYLENTYRRVLKLVGTPIRIEYKGGENPYEGKKNTLTDRQVNKKRRLMSHHKKAEKKRRDKR</sequence>
<name>DER_PSEPW</name>
<gene>
    <name evidence="1" type="primary">der</name>
    <name type="synonym">engA</name>
    <name type="ordered locus">PputW619_4321</name>
</gene>
<comment type="function">
    <text evidence="1">GTPase that plays an essential role in the late steps of ribosome biogenesis.</text>
</comment>
<comment type="subunit">
    <text evidence="1">Associates with the 50S ribosomal subunit.</text>
</comment>
<comment type="similarity">
    <text evidence="1">Belongs to the TRAFAC class TrmE-Era-EngA-EngB-Septin-like GTPase superfamily. EngA (Der) GTPase family.</text>
</comment>